<comment type="function">
    <text evidence="1">Catalyzes the phosphorylation of the position 2 hydroxy group of 4-diphosphocytidyl-2C-methyl-D-erythritol.</text>
</comment>
<comment type="catalytic activity">
    <reaction evidence="1">
        <text>4-CDP-2-C-methyl-D-erythritol + ATP = 4-CDP-2-C-methyl-D-erythritol 2-phosphate + ADP + H(+)</text>
        <dbReference type="Rhea" id="RHEA:18437"/>
        <dbReference type="ChEBI" id="CHEBI:15378"/>
        <dbReference type="ChEBI" id="CHEBI:30616"/>
        <dbReference type="ChEBI" id="CHEBI:57823"/>
        <dbReference type="ChEBI" id="CHEBI:57919"/>
        <dbReference type="ChEBI" id="CHEBI:456216"/>
        <dbReference type="EC" id="2.7.1.148"/>
    </reaction>
</comment>
<comment type="pathway">
    <text evidence="1">Isoprenoid biosynthesis; isopentenyl diphosphate biosynthesis via DXP pathway; isopentenyl diphosphate from 1-deoxy-D-xylulose 5-phosphate: step 3/6.</text>
</comment>
<comment type="similarity">
    <text evidence="1">Belongs to the GHMP kinase family. IspE subfamily.</text>
</comment>
<reference key="1">
    <citation type="journal article" date="2014" name="Stand. Genomic Sci.">
        <title>Complete genome sequence of Anabaena variabilis ATCC 29413.</title>
        <authorList>
            <person name="Thiel T."/>
            <person name="Pratte B.S."/>
            <person name="Zhong J."/>
            <person name="Goodwin L."/>
            <person name="Copeland A."/>
            <person name="Lucas S."/>
            <person name="Han C."/>
            <person name="Pitluck S."/>
            <person name="Land M.L."/>
            <person name="Kyrpides N.C."/>
            <person name="Woyke T."/>
        </authorList>
    </citation>
    <scope>NUCLEOTIDE SEQUENCE [LARGE SCALE GENOMIC DNA]</scope>
    <source>
        <strain>ATCC 29413 / PCC 7937</strain>
    </source>
</reference>
<feature type="chain" id="PRO_0000235058" description="4-diphosphocytidyl-2-C-methyl-D-erythritol kinase">
    <location>
        <begin position="1"/>
        <end position="317"/>
    </location>
</feature>
<feature type="active site" evidence="1">
    <location>
        <position position="11"/>
    </location>
</feature>
<feature type="active site" evidence="1">
    <location>
        <position position="141"/>
    </location>
</feature>
<feature type="binding site" evidence="1">
    <location>
        <begin position="99"/>
        <end position="109"/>
    </location>
    <ligand>
        <name>ATP</name>
        <dbReference type="ChEBI" id="CHEBI:30616"/>
    </ligand>
</feature>
<organism>
    <name type="scientific">Trichormus variabilis (strain ATCC 29413 / PCC 7937)</name>
    <name type="common">Anabaena variabilis</name>
    <dbReference type="NCBI Taxonomy" id="240292"/>
    <lineage>
        <taxon>Bacteria</taxon>
        <taxon>Bacillati</taxon>
        <taxon>Cyanobacteriota</taxon>
        <taxon>Cyanophyceae</taxon>
        <taxon>Nostocales</taxon>
        <taxon>Nostocaceae</taxon>
        <taxon>Trichormus</taxon>
    </lineage>
</organism>
<gene>
    <name evidence="1" type="primary">ispE</name>
    <name type="ordered locus">Ava_4887</name>
</gene>
<proteinExistence type="inferred from homology"/>
<evidence type="ECO:0000255" key="1">
    <source>
        <dbReference type="HAMAP-Rule" id="MF_00061"/>
    </source>
</evidence>
<dbReference type="EC" id="2.7.1.148" evidence="1"/>
<dbReference type="EMBL" id="CP000117">
    <property type="protein sequence ID" value="ABA24484.1"/>
    <property type="molecule type" value="Genomic_DNA"/>
</dbReference>
<dbReference type="SMR" id="Q3M3F2"/>
<dbReference type="STRING" id="240292.Ava_4887"/>
<dbReference type="KEGG" id="ava:Ava_4887"/>
<dbReference type="eggNOG" id="COG1947">
    <property type="taxonomic scope" value="Bacteria"/>
</dbReference>
<dbReference type="HOGENOM" id="CLU_053057_1_1_3"/>
<dbReference type="UniPathway" id="UPA00056">
    <property type="reaction ID" value="UER00094"/>
</dbReference>
<dbReference type="Proteomes" id="UP000002533">
    <property type="component" value="Chromosome"/>
</dbReference>
<dbReference type="GO" id="GO:0050515">
    <property type="term" value="F:4-(cytidine 5'-diphospho)-2-C-methyl-D-erythritol kinase activity"/>
    <property type="evidence" value="ECO:0007669"/>
    <property type="project" value="UniProtKB-UniRule"/>
</dbReference>
<dbReference type="GO" id="GO:0005524">
    <property type="term" value="F:ATP binding"/>
    <property type="evidence" value="ECO:0007669"/>
    <property type="project" value="UniProtKB-UniRule"/>
</dbReference>
<dbReference type="GO" id="GO:0019288">
    <property type="term" value="P:isopentenyl diphosphate biosynthetic process, methylerythritol 4-phosphate pathway"/>
    <property type="evidence" value="ECO:0007669"/>
    <property type="project" value="UniProtKB-UniRule"/>
</dbReference>
<dbReference type="GO" id="GO:0016114">
    <property type="term" value="P:terpenoid biosynthetic process"/>
    <property type="evidence" value="ECO:0007669"/>
    <property type="project" value="InterPro"/>
</dbReference>
<dbReference type="Gene3D" id="3.30.230.10">
    <property type="match status" value="1"/>
</dbReference>
<dbReference type="Gene3D" id="3.30.70.890">
    <property type="entry name" value="GHMP kinase, C-terminal domain"/>
    <property type="match status" value="1"/>
</dbReference>
<dbReference type="HAMAP" id="MF_00061">
    <property type="entry name" value="IspE"/>
    <property type="match status" value="1"/>
</dbReference>
<dbReference type="InterPro" id="IPR013750">
    <property type="entry name" value="GHMP_kinase_C_dom"/>
</dbReference>
<dbReference type="InterPro" id="IPR036554">
    <property type="entry name" value="GHMP_kinase_C_sf"/>
</dbReference>
<dbReference type="InterPro" id="IPR006204">
    <property type="entry name" value="GHMP_kinase_N_dom"/>
</dbReference>
<dbReference type="InterPro" id="IPR004424">
    <property type="entry name" value="IspE"/>
</dbReference>
<dbReference type="InterPro" id="IPR020568">
    <property type="entry name" value="Ribosomal_Su5_D2-typ_SF"/>
</dbReference>
<dbReference type="InterPro" id="IPR014721">
    <property type="entry name" value="Ribsml_uS5_D2-typ_fold_subgr"/>
</dbReference>
<dbReference type="NCBIfam" id="TIGR00154">
    <property type="entry name" value="ispE"/>
    <property type="match status" value="1"/>
</dbReference>
<dbReference type="PANTHER" id="PTHR43527">
    <property type="entry name" value="4-DIPHOSPHOCYTIDYL-2-C-METHYL-D-ERYTHRITOL KINASE, CHLOROPLASTIC"/>
    <property type="match status" value="1"/>
</dbReference>
<dbReference type="PANTHER" id="PTHR43527:SF2">
    <property type="entry name" value="4-DIPHOSPHOCYTIDYL-2-C-METHYL-D-ERYTHRITOL KINASE, CHLOROPLASTIC"/>
    <property type="match status" value="1"/>
</dbReference>
<dbReference type="Pfam" id="PF08544">
    <property type="entry name" value="GHMP_kinases_C"/>
    <property type="match status" value="1"/>
</dbReference>
<dbReference type="Pfam" id="PF00288">
    <property type="entry name" value="GHMP_kinases_N"/>
    <property type="match status" value="1"/>
</dbReference>
<dbReference type="PIRSF" id="PIRSF010376">
    <property type="entry name" value="IspE"/>
    <property type="match status" value="1"/>
</dbReference>
<dbReference type="SUPFAM" id="SSF55060">
    <property type="entry name" value="GHMP Kinase, C-terminal domain"/>
    <property type="match status" value="1"/>
</dbReference>
<dbReference type="SUPFAM" id="SSF54211">
    <property type="entry name" value="Ribosomal protein S5 domain 2-like"/>
    <property type="match status" value="1"/>
</dbReference>
<protein>
    <recommendedName>
        <fullName evidence="1">4-diphosphocytidyl-2-C-methyl-D-erythritol kinase</fullName>
        <shortName evidence="1">CMK</shortName>
        <ecNumber evidence="1">2.7.1.148</ecNumber>
    </recommendedName>
    <alternativeName>
        <fullName evidence="1">4-(cytidine-5'-diphospho)-2-C-methyl-D-erythritol kinase</fullName>
    </alternativeName>
</protein>
<keyword id="KW-0067">ATP-binding</keyword>
<keyword id="KW-0414">Isoprene biosynthesis</keyword>
<keyword id="KW-0418">Kinase</keyword>
<keyword id="KW-0547">Nucleotide-binding</keyword>
<keyword id="KW-0808">Transferase</keyword>
<sequence length="317" mass="34517">MRSYKLIAPAKINLYLEIIGDRPDGYHELVMILQSIDLADEIEIHSLSSETIRVHCNHPQVPTDKSNLVYRAAELMATKFPEAFAKYGGVDITVHKHIPVAAGLAGGSTNAAAVLVGIDLLWNLGLTQTELEELGSILGSDVPFCVAGGTVIATGRGEQLSPLPNLDHIYIVLGKYRSLEVSTAWAYKTYRQEYGSTYLRDTNDLASRAAAVHSGSIVKAIVEKDAVAIAQKLHNDLEKVVLPSYPQVLQLRELFASQPSVIGTMMSGSGPSVFALCENQAQAEQVQQQVRQTIPDEDLELFVTRTITHGIQVLGNE</sequence>
<accession>Q3M3F2</accession>
<name>ISPE_TRIV2</name>